<sequence>MKHSVHFGAGNIGRGFIGEILFKNGFHIDFVDVNNQIIHALNEKGKYEIEIAQKGQSRIEVTNVAGINSKEHPEQVIEAIQKTDIITTAIGPNILPFIAELLAKGIEARRVAGNTQVLDVMACENMIGGSQFLYQEVKKYLSPEGLTFADNYIGFPNAAVDRIVPAQSHEDSLFVVVEPFNEWVVETKRLKNPDLRLKDVHYEEDLEPFIERKLFSVNSGHATSAYIGAHYGAKTILEALQNPNIKSRIESVLAEIRSLLIAKWNFDKKELENYHKVIIERFENPFIVDEVSRVARTPIRKLGYNERFIRPIRELKELSLSYKNLLKTVGYAFDYRDVNDEESIRLGELLAKQSVKDVVIQVTGLDDQELIEQIVEYI</sequence>
<accession>B5E7E0</accession>
<feature type="chain" id="PRO_1000099204" description="Mannitol-1-phosphate 5-dehydrogenase">
    <location>
        <begin position="1"/>
        <end position="378"/>
    </location>
</feature>
<feature type="binding site" evidence="1">
    <location>
        <begin position="4"/>
        <end position="15"/>
    </location>
    <ligand>
        <name>NAD(+)</name>
        <dbReference type="ChEBI" id="CHEBI:57540"/>
    </ligand>
</feature>
<keyword id="KW-0520">NAD</keyword>
<keyword id="KW-0560">Oxidoreductase</keyword>
<name>MTLD_STRP4</name>
<evidence type="ECO:0000255" key="1">
    <source>
        <dbReference type="HAMAP-Rule" id="MF_00196"/>
    </source>
</evidence>
<reference key="1">
    <citation type="journal article" date="2001" name="Microb. Drug Resist.">
        <title>Annotated draft genomic sequence from a Streptococcus pneumoniae type 19F clinical isolate.</title>
        <authorList>
            <person name="Dopazo J."/>
            <person name="Mendoza A."/>
            <person name="Herrero J."/>
            <person name="Caldara F."/>
            <person name="Humbert Y."/>
            <person name="Friedli L."/>
            <person name="Guerrier M."/>
            <person name="Grand-Schenk E."/>
            <person name="Gandin C."/>
            <person name="de Francesco M."/>
            <person name="Polissi A."/>
            <person name="Buell G."/>
            <person name="Feger G."/>
            <person name="Garcia E."/>
            <person name="Peitsch M."/>
            <person name="Garcia-Bustos J.F."/>
        </authorList>
    </citation>
    <scope>NUCLEOTIDE SEQUENCE [LARGE SCALE GENOMIC DNA]</scope>
    <source>
        <strain>G54</strain>
    </source>
</reference>
<reference key="2">
    <citation type="submission" date="2008-03" db="EMBL/GenBank/DDBJ databases">
        <title>Pneumococcal beta glucoside metabolism investigated by whole genome comparison.</title>
        <authorList>
            <person name="Mulas L."/>
            <person name="Trappetti C."/>
            <person name="Hakenbeck R."/>
            <person name="Iannelli F."/>
            <person name="Pozzi G."/>
            <person name="Davidsen T.M."/>
            <person name="Tettelin H."/>
            <person name="Oggioni M."/>
        </authorList>
    </citation>
    <scope>NUCLEOTIDE SEQUENCE [LARGE SCALE GENOMIC DNA]</scope>
    <source>
        <strain>G54</strain>
    </source>
</reference>
<dbReference type="EC" id="1.1.1.17" evidence="1"/>
<dbReference type="EMBL" id="CP001015">
    <property type="protein sequence ID" value="ACF55348.1"/>
    <property type="molecule type" value="Genomic_DNA"/>
</dbReference>
<dbReference type="SMR" id="B5E7E0"/>
<dbReference type="KEGG" id="spx:SPG_0365"/>
<dbReference type="HOGENOM" id="CLU_036089_2_0_9"/>
<dbReference type="GO" id="GO:0005829">
    <property type="term" value="C:cytosol"/>
    <property type="evidence" value="ECO:0007669"/>
    <property type="project" value="TreeGrafter"/>
</dbReference>
<dbReference type="GO" id="GO:0008926">
    <property type="term" value="F:mannitol-1-phosphate 5-dehydrogenase activity"/>
    <property type="evidence" value="ECO:0007669"/>
    <property type="project" value="UniProtKB-UniRule"/>
</dbReference>
<dbReference type="GO" id="GO:0019592">
    <property type="term" value="P:mannitol catabolic process"/>
    <property type="evidence" value="ECO:0007669"/>
    <property type="project" value="TreeGrafter"/>
</dbReference>
<dbReference type="FunFam" id="1.10.1040.10:FF:000042">
    <property type="entry name" value="Mannitol-1-phosphate 5-dehydrogenase"/>
    <property type="match status" value="1"/>
</dbReference>
<dbReference type="FunFam" id="3.40.50.720:FF:000586">
    <property type="entry name" value="Mannitol-1-phosphate 5-dehydrogenase"/>
    <property type="match status" value="1"/>
</dbReference>
<dbReference type="Gene3D" id="1.10.1040.10">
    <property type="entry name" value="N-(1-d-carboxylethyl)-l-norvaline Dehydrogenase, domain 2"/>
    <property type="match status" value="1"/>
</dbReference>
<dbReference type="Gene3D" id="3.40.50.720">
    <property type="entry name" value="NAD(P)-binding Rossmann-like Domain"/>
    <property type="match status" value="1"/>
</dbReference>
<dbReference type="HAMAP" id="MF_00196">
    <property type="entry name" value="Mannitol_dehydrog"/>
    <property type="match status" value="1"/>
</dbReference>
<dbReference type="InterPro" id="IPR008927">
    <property type="entry name" value="6-PGluconate_DH-like_C_sf"/>
</dbReference>
<dbReference type="InterPro" id="IPR013328">
    <property type="entry name" value="6PGD_dom2"/>
</dbReference>
<dbReference type="InterPro" id="IPR023028">
    <property type="entry name" value="Mannitol_1_phos_5_DH"/>
</dbReference>
<dbReference type="InterPro" id="IPR000669">
    <property type="entry name" value="Mannitol_DH"/>
</dbReference>
<dbReference type="InterPro" id="IPR013118">
    <property type="entry name" value="Mannitol_DH_C"/>
</dbReference>
<dbReference type="InterPro" id="IPR023027">
    <property type="entry name" value="Mannitol_DH_CS"/>
</dbReference>
<dbReference type="InterPro" id="IPR013131">
    <property type="entry name" value="Mannitol_DH_N"/>
</dbReference>
<dbReference type="InterPro" id="IPR036291">
    <property type="entry name" value="NAD(P)-bd_dom_sf"/>
</dbReference>
<dbReference type="NCBIfam" id="NF002647">
    <property type="entry name" value="PRK02318.1-3"/>
    <property type="match status" value="1"/>
</dbReference>
<dbReference type="NCBIfam" id="NF002652">
    <property type="entry name" value="PRK02318.2-5"/>
    <property type="match status" value="1"/>
</dbReference>
<dbReference type="PANTHER" id="PTHR30524:SF0">
    <property type="entry name" value="ALTRONATE OXIDOREDUCTASE-RELATED"/>
    <property type="match status" value="1"/>
</dbReference>
<dbReference type="PANTHER" id="PTHR30524">
    <property type="entry name" value="MANNITOL-1-PHOSPHATE 5-DEHYDROGENASE"/>
    <property type="match status" value="1"/>
</dbReference>
<dbReference type="Pfam" id="PF01232">
    <property type="entry name" value="Mannitol_dh"/>
    <property type="match status" value="1"/>
</dbReference>
<dbReference type="Pfam" id="PF08125">
    <property type="entry name" value="Mannitol_dh_C"/>
    <property type="match status" value="1"/>
</dbReference>
<dbReference type="PRINTS" id="PR00084">
    <property type="entry name" value="MTLDHDRGNASE"/>
</dbReference>
<dbReference type="SUPFAM" id="SSF48179">
    <property type="entry name" value="6-phosphogluconate dehydrogenase C-terminal domain-like"/>
    <property type="match status" value="1"/>
</dbReference>
<dbReference type="SUPFAM" id="SSF51735">
    <property type="entry name" value="NAD(P)-binding Rossmann-fold domains"/>
    <property type="match status" value="1"/>
</dbReference>
<dbReference type="PROSITE" id="PS00974">
    <property type="entry name" value="MANNITOL_DHGENASE"/>
    <property type="match status" value="1"/>
</dbReference>
<comment type="catalytic activity">
    <reaction evidence="1">
        <text>D-mannitol 1-phosphate + NAD(+) = beta-D-fructose 6-phosphate + NADH + H(+)</text>
        <dbReference type="Rhea" id="RHEA:19661"/>
        <dbReference type="ChEBI" id="CHEBI:15378"/>
        <dbReference type="ChEBI" id="CHEBI:57540"/>
        <dbReference type="ChEBI" id="CHEBI:57634"/>
        <dbReference type="ChEBI" id="CHEBI:57945"/>
        <dbReference type="ChEBI" id="CHEBI:61381"/>
        <dbReference type="EC" id="1.1.1.17"/>
    </reaction>
</comment>
<comment type="similarity">
    <text evidence="1">Belongs to the mannitol dehydrogenase family.</text>
</comment>
<proteinExistence type="inferred from homology"/>
<organism>
    <name type="scientific">Streptococcus pneumoniae serotype 19F (strain G54)</name>
    <dbReference type="NCBI Taxonomy" id="512566"/>
    <lineage>
        <taxon>Bacteria</taxon>
        <taxon>Bacillati</taxon>
        <taxon>Bacillota</taxon>
        <taxon>Bacilli</taxon>
        <taxon>Lactobacillales</taxon>
        <taxon>Streptococcaceae</taxon>
        <taxon>Streptococcus</taxon>
    </lineage>
</organism>
<gene>
    <name evidence="1" type="primary">mtlD</name>
    <name type="ordered locus">SPG_0365</name>
</gene>
<protein>
    <recommendedName>
        <fullName evidence="1">Mannitol-1-phosphate 5-dehydrogenase</fullName>
        <ecNumber evidence="1">1.1.1.17</ecNumber>
    </recommendedName>
</protein>